<name>PNOC_PIG</name>
<sequence>FGGFTGARKSARKLANQ</sequence>
<feature type="peptide" id="PRO_0000043646" description="Nociceptin" evidence="1">
    <location>
        <begin position="1"/>
        <end position="17"/>
    </location>
</feature>
<comment type="function">
    <text evidence="1">Ligand of the opioid receptor-like receptor OPRL1. It may act as a transmitter in the brain by modulating nociceptive and locomotor behavior. May be involved in neuronal differentiation and development. When administered intracerebroventricularly into mice, this peptide induces hyperalgesia and decreases locomotor activity.</text>
</comment>
<comment type="subcellular location">
    <subcellularLocation>
        <location>Secreted</location>
    </subcellularLocation>
</comment>
<comment type="similarity">
    <text evidence="3">Belongs to the opioid neuropeptide precursor family.</text>
</comment>
<keyword id="KW-0903">Direct protein sequencing</keyword>
<keyword id="KW-0527">Neuropeptide</keyword>
<keyword id="KW-0529">Neurotransmitter</keyword>
<keyword id="KW-0555">Opioid peptide</keyword>
<keyword id="KW-1185">Reference proteome</keyword>
<keyword id="KW-0964">Secreted</keyword>
<reference key="1">
    <citation type="journal article" date="1995" name="Science">
        <title>Orphanin FQ: a neuropeptide that activates an opioidlike G protein-coupled receptor.</title>
        <authorList>
            <person name="Reinscheid R.K."/>
            <person name="Nothacker H.-P."/>
            <person name="Bourson A."/>
            <person name="Ardati A."/>
            <person name="Henningsen R.A."/>
            <person name="Bunzow J.R."/>
            <person name="Grandy D.K."/>
            <person name="Langen H."/>
            <person name="Monsma F.J. Jr."/>
            <person name="Civelli O."/>
        </authorList>
    </citation>
    <scope>PROTEIN SEQUENCE</scope>
    <scope>FUNCTION</scope>
    <source>
        <tissue>Hypothalamus</tissue>
    </source>
</reference>
<protein>
    <recommendedName>
        <fullName>Nociceptin</fullName>
    </recommendedName>
    <alternativeName>
        <fullName evidence="2">Orphanin FQ</fullName>
    </alternativeName>
</protein>
<dbReference type="eggNOG" id="ENOG502S0DD">
    <property type="taxonomic scope" value="Eukaryota"/>
</dbReference>
<dbReference type="InParanoid" id="P55791"/>
<dbReference type="Proteomes" id="UP000008227">
    <property type="component" value="Unplaced"/>
</dbReference>
<dbReference type="Proteomes" id="UP000314985">
    <property type="component" value="Unplaced"/>
</dbReference>
<dbReference type="Proteomes" id="UP000694570">
    <property type="component" value="Unplaced"/>
</dbReference>
<dbReference type="Proteomes" id="UP000694571">
    <property type="component" value="Unplaced"/>
</dbReference>
<dbReference type="Proteomes" id="UP000694720">
    <property type="component" value="Unplaced"/>
</dbReference>
<dbReference type="Proteomes" id="UP000694722">
    <property type="component" value="Unplaced"/>
</dbReference>
<dbReference type="Proteomes" id="UP000694723">
    <property type="component" value="Unplaced"/>
</dbReference>
<dbReference type="Proteomes" id="UP000694724">
    <property type="component" value="Unplaced"/>
</dbReference>
<dbReference type="Proteomes" id="UP000694725">
    <property type="component" value="Unplaced"/>
</dbReference>
<dbReference type="Proteomes" id="UP000694726">
    <property type="component" value="Unplaced"/>
</dbReference>
<dbReference type="Proteomes" id="UP000694727">
    <property type="component" value="Unplaced"/>
</dbReference>
<dbReference type="Proteomes" id="UP000694728">
    <property type="component" value="Unplaced"/>
</dbReference>
<dbReference type="GO" id="GO:0005576">
    <property type="term" value="C:extracellular region"/>
    <property type="evidence" value="ECO:0007669"/>
    <property type="project" value="UniProtKB-SubCell"/>
</dbReference>
<dbReference type="GO" id="GO:0045202">
    <property type="term" value="C:synapse"/>
    <property type="evidence" value="ECO:0007669"/>
    <property type="project" value="GOC"/>
</dbReference>
<dbReference type="GO" id="GO:0001515">
    <property type="term" value="F:opioid peptide activity"/>
    <property type="evidence" value="ECO:0007669"/>
    <property type="project" value="UniProtKB-KW"/>
</dbReference>
<dbReference type="GO" id="GO:0007268">
    <property type="term" value="P:chemical synaptic transmission"/>
    <property type="evidence" value="ECO:0007669"/>
    <property type="project" value="UniProtKB-KW"/>
</dbReference>
<dbReference type="GO" id="GO:0007218">
    <property type="term" value="P:neuropeptide signaling pathway"/>
    <property type="evidence" value="ECO:0007669"/>
    <property type="project" value="UniProtKB-KW"/>
</dbReference>
<gene>
    <name type="primary">PNOC</name>
</gene>
<evidence type="ECO:0000269" key="1">
    <source>
    </source>
</evidence>
<evidence type="ECO:0000303" key="2">
    <source>
    </source>
</evidence>
<evidence type="ECO:0000305" key="3"/>
<proteinExistence type="evidence at protein level"/>
<organism>
    <name type="scientific">Sus scrofa</name>
    <name type="common">Pig</name>
    <dbReference type="NCBI Taxonomy" id="9823"/>
    <lineage>
        <taxon>Eukaryota</taxon>
        <taxon>Metazoa</taxon>
        <taxon>Chordata</taxon>
        <taxon>Craniata</taxon>
        <taxon>Vertebrata</taxon>
        <taxon>Euteleostomi</taxon>
        <taxon>Mammalia</taxon>
        <taxon>Eutheria</taxon>
        <taxon>Laurasiatheria</taxon>
        <taxon>Artiodactyla</taxon>
        <taxon>Suina</taxon>
        <taxon>Suidae</taxon>
        <taxon>Sus</taxon>
    </lineage>
</organism>
<accession>P55791</accession>